<protein>
    <recommendedName>
        <fullName evidence="1">Glutamate 5-kinase</fullName>
        <ecNumber evidence="1">2.7.2.11</ecNumber>
    </recommendedName>
    <alternativeName>
        <fullName evidence="1">Gamma-glutamyl kinase</fullName>
        <shortName evidence="1">GK</shortName>
    </alternativeName>
</protein>
<reference key="1">
    <citation type="journal article" date="2009" name="J. Bacteriol.">
        <title>The genome of Burkholderia cenocepacia J2315, an epidemic pathogen of cystic fibrosis patients.</title>
        <authorList>
            <person name="Holden M.T."/>
            <person name="Seth-Smith H.M."/>
            <person name="Crossman L.C."/>
            <person name="Sebaihia M."/>
            <person name="Bentley S.D."/>
            <person name="Cerdeno-Tarraga A.M."/>
            <person name="Thomson N.R."/>
            <person name="Bason N."/>
            <person name="Quail M.A."/>
            <person name="Sharp S."/>
            <person name="Cherevach I."/>
            <person name="Churcher C."/>
            <person name="Goodhead I."/>
            <person name="Hauser H."/>
            <person name="Holroyd N."/>
            <person name="Mungall K."/>
            <person name="Scott P."/>
            <person name="Walker D."/>
            <person name="White B."/>
            <person name="Rose H."/>
            <person name="Iversen P."/>
            <person name="Mil-Homens D."/>
            <person name="Rocha E.P."/>
            <person name="Fialho A.M."/>
            <person name="Baldwin A."/>
            <person name="Dowson C."/>
            <person name="Barrell B.G."/>
            <person name="Govan J.R."/>
            <person name="Vandamme P."/>
            <person name="Hart C.A."/>
            <person name="Mahenthiralingam E."/>
            <person name="Parkhill J."/>
        </authorList>
    </citation>
    <scope>NUCLEOTIDE SEQUENCE [LARGE SCALE GENOMIC DNA]</scope>
    <source>
        <strain>ATCC BAA-245 / DSM 16553 / LMG 16656 / NCTC 13227 / J2315 / CF5610</strain>
    </source>
</reference>
<gene>
    <name evidence="1" type="primary">proB</name>
    <name type="ordered locus">BceJ2315_33770</name>
    <name type="ORF">BCAL3439</name>
</gene>
<accession>B4E5W9</accession>
<proteinExistence type="inferred from homology"/>
<comment type="function">
    <text evidence="1">Catalyzes the transfer of a phosphate group to glutamate to form L-glutamate 5-phosphate.</text>
</comment>
<comment type="catalytic activity">
    <reaction evidence="1">
        <text>L-glutamate + ATP = L-glutamyl 5-phosphate + ADP</text>
        <dbReference type="Rhea" id="RHEA:14877"/>
        <dbReference type="ChEBI" id="CHEBI:29985"/>
        <dbReference type="ChEBI" id="CHEBI:30616"/>
        <dbReference type="ChEBI" id="CHEBI:58274"/>
        <dbReference type="ChEBI" id="CHEBI:456216"/>
        <dbReference type="EC" id="2.7.2.11"/>
    </reaction>
</comment>
<comment type="pathway">
    <text evidence="1">Amino-acid biosynthesis; L-proline biosynthesis; L-glutamate 5-semialdehyde from L-glutamate: step 1/2.</text>
</comment>
<comment type="subcellular location">
    <subcellularLocation>
        <location evidence="1">Cytoplasm</location>
    </subcellularLocation>
</comment>
<comment type="similarity">
    <text evidence="1">Belongs to the glutamate 5-kinase family.</text>
</comment>
<organism>
    <name type="scientific">Burkholderia cenocepacia (strain ATCC BAA-245 / DSM 16553 / LMG 16656 / NCTC 13227 / J2315 / CF5610)</name>
    <name type="common">Burkholderia cepacia (strain J2315)</name>
    <dbReference type="NCBI Taxonomy" id="216591"/>
    <lineage>
        <taxon>Bacteria</taxon>
        <taxon>Pseudomonadati</taxon>
        <taxon>Pseudomonadota</taxon>
        <taxon>Betaproteobacteria</taxon>
        <taxon>Burkholderiales</taxon>
        <taxon>Burkholderiaceae</taxon>
        <taxon>Burkholderia</taxon>
        <taxon>Burkholderia cepacia complex</taxon>
    </lineage>
</organism>
<name>PROB_BURCJ</name>
<dbReference type="EC" id="2.7.2.11" evidence="1"/>
<dbReference type="EMBL" id="AM747720">
    <property type="protein sequence ID" value="CAR53762.1"/>
    <property type="molecule type" value="Genomic_DNA"/>
</dbReference>
<dbReference type="RefSeq" id="WP_006476997.1">
    <property type="nucleotide sequence ID" value="NC_011000.1"/>
</dbReference>
<dbReference type="SMR" id="B4E5W9"/>
<dbReference type="GeneID" id="56557023"/>
<dbReference type="KEGG" id="bcj:BCAL3439"/>
<dbReference type="eggNOG" id="COG0263">
    <property type="taxonomic scope" value="Bacteria"/>
</dbReference>
<dbReference type="HOGENOM" id="CLU_025400_2_0_4"/>
<dbReference type="BioCyc" id="BCEN216591:G1G1V-3823-MONOMER"/>
<dbReference type="UniPathway" id="UPA00098">
    <property type="reaction ID" value="UER00359"/>
</dbReference>
<dbReference type="Proteomes" id="UP000001035">
    <property type="component" value="Chromosome 1"/>
</dbReference>
<dbReference type="GO" id="GO:0005829">
    <property type="term" value="C:cytosol"/>
    <property type="evidence" value="ECO:0007669"/>
    <property type="project" value="TreeGrafter"/>
</dbReference>
<dbReference type="GO" id="GO:0005524">
    <property type="term" value="F:ATP binding"/>
    <property type="evidence" value="ECO:0007669"/>
    <property type="project" value="UniProtKB-KW"/>
</dbReference>
<dbReference type="GO" id="GO:0004349">
    <property type="term" value="F:glutamate 5-kinase activity"/>
    <property type="evidence" value="ECO:0007669"/>
    <property type="project" value="UniProtKB-UniRule"/>
</dbReference>
<dbReference type="GO" id="GO:0003723">
    <property type="term" value="F:RNA binding"/>
    <property type="evidence" value="ECO:0007669"/>
    <property type="project" value="InterPro"/>
</dbReference>
<dbReference type="GO" id="GO:0055129">
    <property type="term" value="P:L-proline biosynthetic process"/>
    <property type="evidence" value="ECO:0007669"/>
    <property type="project" value="UniProtKB-UniRule"/>
</dbReference>
<dbReference type="CDD" id="cd04242">
    <property type="entry name" value="AAK_G5K_ProB"/>
    <property type="match status" value="1"/>
</dbReference>
<dbReference type="CDD" id="cd21157">
    <property type="entry name" value="PUA_G5K"/>
    <property type="match status" value="1"/>
</dbReference>
<dbReference type="FunFam" id="2.30.130.10:FF:000007">
    <property type="entry name" value="Glutamate 5-kinase"/>
    <property type="match status" value="1"/>
</dbReference>
<dbReference type="FunFam" id="3.40.1160.10:FF:000018">
    <property type="entry name" value="Glutamate 5-kinase"/>
    <property type="match status" value="1"/>
</dbReference>
<dbReference type="Gene3D" id="3.40.1160.10">
    <property type="entry name" value="Acetylglutamate kinase-like"/>
    <property type="match status" value="1"/>
</dbReference>
<dbReference type="Gene3D" id="2.30.130.10">
    <property type="entry name" value="PUA domain"/>
    <property type="match status" value="1"/>
</dbReference>
<dbReference type="HAMAP" id="MF_00456">
    <property type="entry name" value="ProB"/>
    <property type="match status" value="1"/>
</dbReference>
<dbReference type="InterPro" id="IPR036393">
    <property type="entry name" value="AceGlu_kinase-like_sf"/>
</dbReference>
<dbReference type="InterPro" id="IPR001048">
    <property type="entry name" value="Asp/Glu/Uridylate_kinase"/>
</dbReference>
<dbReference type="InterPro" id="IPR041739">
    <property type="entry name" value="G5K_ProB"/>
</dbReference>
<dbReference type="InterPro" id="IPR001057">
    <property type="entry name" value="Glu/AcGlu_kinase"/>
</dbReference>
<dbReference type="InterPro" id="IPR011529">
    <property type="entry name" value="Glu_5kinase"/>
</dbReference>
<dbReference type="InterPro" id="IPR005715">
    <property type="entry name" value="Glu_5kinase/COase_Synthase"/>
</dbReference>
<dbReference type="InterPro" id="IPR019797">
    <property type="entry name" value="Glutamate_5-kinase_CS"/>
</dbReference>
<dbReference type="InterPro" id="IPR002478">
    <property type="entry name" value="PUA"/>
</dbReference>
<dbReference type="InterPro" id="IPR015947">
    <property type="entry name" value="PUA-like_sf"/>
</dbReference>
<dbReference type="InterPro" id="IPR036974">
    <property type="entry name" value="PUA_sf"/>
</dbReference>
<dbReference type="NCBIfam" id="TIGR01027">
    <property type="entry name" value="proB"/>
    <property type="match status" value="1"/>
</dbReference>
<dbReference type="PANTHER" id="PTHR43654">
    <property type="entry name" value="GLUTAMATE 5-KINASE"/>
    <property type="match status" value="1"/>
</dbReference>
<dbReference type="PANTHER" id="PTHR43654:SF1">
    <property type="entry name" value="ISOPENTENYL PHOSPHATE KINASE"/>
    <property type="match status" value="1"/>
</dbReference>
<dbReference type="Pfam" id="PF00696">
    <property type="entry name" value="AA_kinase"/>
    <property type="match status" value="1"/>
</dbReference>
<dbReference type="Pfam" id="PF01472">
    <property type="entry name" value="PUA"/>
    <property type="match status" value="1"/>
</dbReference>
<dbReference type="PIRSF" id="PIRSF000729">
    <property type="entry name" value="GK"/>
    <property type="match status" value="1"/>
</dbReference>
<dbReference type="PRINTS" id="PR00474">
    <property type="entry name" value="GLU5KINASE"/>
</dbReference>
<dbReference type="SMART" id="SM00359">
    <property type="entry name" value="PUA"/>
    <property type="match status" value="1"/>
</dbReference>
<dbReference type="SUPFAM" id="SSF53633">
    <property type="entry name" value="Carbamate kinase-like"/>
    <property type="match status" value="1"/>
</dbReference>
<dbReference type="SUPFAM" id="SSF88697">
    <property type="entry name" value="PUA domain-like"/>
    <property type="match status" value="1"/>
</dbReference>
<dbReference type="PROSITE" id="PS00902">
    <property type="entry name" value="GLUTAMATE_5_KINASE"/>
    <property type="match status" value="1"/>
</dbReference>
<dbReference type="PROSITE" id="PS50890">
    <property type="entry name" value="PUA"/>
    <property type="match status" value="1"/>
</dbReference>
<feature type="chain" id="PRO_1000125218" description="Glutamate 5-kinase">
    <location>
        <begin position="1"/>
        <end position="372"/>
    </location>
</feature>
<feature type="domain" description="PUA" evidence="1">
    <location>
        <begin position="280"/>
        <end position="358"/>
    </location>
</feature>
<feature type="binding site" evidence="1">
    <location>
        <position position="14"/>
    </location>
    <ligand>
        <name>ATP</name>
        <dbReference type="ChEBI" id="CHEBI:30616"/>
    </ligand>
</feature>
<feature type="binding site" evidence="1">
    <location>
        <position position="54"/>
    </location>
    <ligand>
        <name>substrate</name>
    </ligand>
</feature>
<feature type="binding site" evidence="1">
    <location>
        <position position="141"/>
    </location>
    <ligand>
        <name>substrate</name>
    </ligand>
</feature>
<feature type="binding site" evidence="1">
    <location>
        <position position="153"/>
    </location>
    <ligand>
        <name>substrate</name>
    </ligand>
</feature>
<feature type="binding site" evidence="1">
    <location>
        <begin position="173"/>
        <end position="174"/>
    </location>
    <ligand>
        <name>ATP</name>
        <dbReference type="ChEBI" id="CHEBI:30616"/>
    </ligand>
</feature>
<sequence>MRSIIADSKRLVVKVGSSLVTNDGKGLDHAAIGRWAAQIAALRAQGKEVVLVSSGAIAEGMQRLGWSKRPREIDELQAAAAVGQMGLAQVYESRFTEHGIRTAQILLTHADLADRERYLNARSTLLTLLRLGVVPIINENDTVVTDEIKFGDNDTLGALVANLIEGDALIILTDQSGLFTADPRKDPNATLVGEANAGAPELEAMAGGAGSSLGRGGMLTKILAAKRAAHSGANTVIASGREADVLVRLAAGEAIGTQLIARTARMAARKQWMADHLQVRGHVVIDAGAVEKLTAGGKSLLPIGVIDVQGAFARGEVIACVGPDGREVARGLTNYSSAETKLIHRKPSGEIETVLGYMLEPELIHRDNLVLV</sequence>
<keyword id="KW-0028">Amino-acid biosynthesis</keyword>
<keyword id="KW-0067">ATP-binding</keyword>
<keyword id="KW-0963">Cytoplasm</keyword>
<keyword id="KW-0418">Kinase</keyword>
<keyword id="KW-0547">Nucleotide-binding</keyword>
<keyword id="KW-0641">Proline biosynthesis</keyword>
<keyword id="KW-0808">Transferase</keyword>
<evidence type="ECO:0000255" key="1">
    <source>
        <dbReference type="HAMAP-Rule" id="MF_00456"/>
    </source>
</evidence>